<proteinExistence type="evidence at protein level"/>
<accession>P0DPN1</accession>
<accession>A0A385XJN0</accession>
<comment type="subcellular location">
    <subcellularLocation>
        <location evidence="4">Cell inner membrane</location>
        <topology evidence="1">Single-pass membrane protein</topology>
    </subcellularLocation>
</comment>
<comment type="induction">
    <text evidence="2">Expressed in both exponential and stationary phase; expression is higher in exponential phase (at protein level).</text>
</comment>
<feature type="chain" id="PRO_0000445159" description="Protein YkiC">
    <location>
        <begin position="1"/>
        <end position="39"/>
    </location>
</feature>
<feature type="transmembrane region" description="Helical" evidence="1">
    <location>
        <begin position="13"/>
        <end position="35"/>
    </location>
</feature>
<organism>
    <name type="scientific">Escherichia coli (strain K12)</name>
    <dbReference type="NCBI Taxonomy" id="83333"/>
    <lineage>
        <taxon>Bacteria</taxon>
        <taxon>Pseudomonadati</taxon>
        <taxon>Pseudomonadota</taxon>
        <taxon>Gammaproteobacteria</taxon>
        <taxon>Enterobacterales</taxon>
        <taxon>Enterobacteriaceae</taxon>
        <taxon>Escherichia</taxon>
    </lineage>
</organism>
<evidence type="ECO:0000255" key="1"/>
<evidence type="ECO:0000269" key="2">
    <source>
    </source>
</evidence>
<evidence type="ECO:0000303" key="3">
    <source>
    </source>
</evidence>
<evidence type="ECO:0000305" key="4"/>
<reference key="1">
    <citation type="journal article" date="1997" name="Science">
        <title>The complete genome sequence of Escherichia coli K-12.</title>
        <authorList>
            <person name="Blattner F.R."/>
            <person name="Plunkett G. III"/>
            <person name="Bloch C.A."/>
            <person name="Perna N.T."/>
            <person name="Burland V."/>
            <person name="Riley M."/>
            <person name="Collado-Vides J."/>
            <person name="Glasner J.D."/>
            <person name="Rode C.K."/>
            <person name="Mayhew G.F."/>
            <person name="Gregor J."/>
            <person name="Davis N.W."/>
            <person name="Kirkpatrick H.A."/>
            <person name="Goeden M.A."/>
            <person name="Rose D.J."/>
            <person name="Mau B."/>
            <person name="Shao Y."/>
        </authorList>
    </citation>
    <scope>NUCLEOTIDE SEQUENCE [LARGE SCALE GENOMIC DNA]</scope>
    <source>
        <strain>K12 / MG1655 / ATCC 47076</strain>
    </source>
</reference>
<reference key="2">
    <citation type="journal article" date="2018" name="Proteomics">
        <title>Identifying new small proteins in Escherichia coli.</title>
        <authorList>
            <person name="VanOrsdel C.E."/>
            <person name="Kelly J.P."/>
            <person name="Burke B.N."/>
            <person name="Lein C.D."/>
            <person name="Oufiero C.E."/>
            <person name="Sanchez J.F."/>
            <person name="Wimmers L.E."/>
            <person name="Hearn D.J."/>
            <person name="Abuikhdair F.J."/>
            <person name="Barnhart K.R."/>
            <person name="Duley M.L."/>
            <person name="Ernst S.E.G."/>
            <person name="Kenerson B.A."/>
            <person name="Serafin A.J."/>
            <person name="Hemm M.R."/>
        </authorList>
    </citation>
    <scope>IDENTIFICATION</scope>
    <scope>INDUCTION</scope>
</reference>
<protein>
    <recommendedName>
        <fullName evidence="3">Protein YkiC</fullName>
    </recommendedName>
</protein>
<sequence>MNYKAFTQIAIDLLSAKLCNCTQAIMTHIIASFLAFMFF</sequence>
<name>YKIC_ECOLI</name>
<gene>
    <name evidence="3" type="primary">ykiC</name>
    <name type="ordered locus">b4731</name>
</gene>
<dbReference type="EMBL" id="U00096">
    <property type="protein sequence ID" value="AYC08177.1"/>
    <property type="molecule type" value="Genomic_DNA"/>
</dbReference>
<dbReference type="EnsemblBacteria" id="AYC08177">
    <property type="protein sequence ID" value="AYC08177"/>
    <property type="gene ID" value="b4731"/>
</dbReference>
<dbReference type="InParanoid" id="P0DPN1"/>
<dbReference type="BioCyc" id="EcoCyc:MONOMER0-4408"/>
<dbReference type="PRO" id="PR:P0DPN1"/>
<dbReference type="Proteomes" id="UP000000625">
    <property type="component" value="Chromosome"/>
</dbReference>
<dbReference type="GO" id="GO:0005886">
    <property type="term" value="C:plasma membrane"/>
    <property type="evidence" value="ECO:0007669"/>
    <property type="project" value="UniProtKB-SubCell"/>
</dbReference>
<dbReference type="Pfam" id="PF23686">
    <property type="entry name" value="YkiC"/>
    <property type="match status" value="1"/>
</dbReference>
<keyword id="KW-0997">Cell inner membrane</keyword>
<keyword id="KW-1003">Cell membrane</keyword>
<keyword id="KW-0472">Membrane</keyword>
<keyword id="KW-1185">Reference proteome</keyword>
<keyword id="KW-0812">Transmembrane</keyword>
<keyword id="KW-1133">Transmembrane helix</keyword>